<feature type="chain" id="PRO_0000098294" description="DNA translocase FtsK">
    <location>
        <begin position="1"/>
        <end position="788"/>
    </location>
</feature>
<feature type="transmembrane region" description="Helical" evidence="2">
    <location>
        <begin position="34"/>
        <end position="54"/>
    </location>
</feature>
<feature type="transmembrane region" description="Helical" evidence="2">
    <location>
        <begin position="63"/>
        <end position="83"/>
    </location>
</feature>
<feature type="transmembrane region" description="Helical" evidence="2">
    <location>
        <begin position="99"/>
        <end position="119"/>
    </location>
</feature>
<feature type="transmembrane region" description="Helical" evidence="2">
    <location>
        <begin position="137"/>
        <end position="157"/>
    </location>
</feature>
<feature type="transmembrane region" description="Helical" evidence="2">
    <location>
        <begin position="158"/>
        <end position="178"/>
    </location>
</feature>
<feature type="topological domain" description="Cytoplasmic" evidence="2">
    <location>
        <begin position="179"/>
        <end position="788"/>
    </location>
</feature>
<feature type="domain" description="FtsK" evidence="3">
    <location>
        <begin position="453"/>
        <end position="649"/>
    </location>
</feature>
<feature type="region of interest" description="Disordered" evidence="4">
    <location>
        <begin position="1"/>
        <end position="25"/>
    </location>
</feature>
<feature type="region of interest" description="Disordered" evidence="4">
    <location>
        <begin position="209"/>
        <end position="244"/>
    </location>
</feature>
<feature type="region of interest" description="Disordered" evidence="4">
    <location>
        <begin position="253"/>
        <end position="272"/>
    </location>
</feature>
<feature type="compositionally biased region" description="Basic and acidic residues" evidence="4">
    <location>
        <begin position="209"/>
        <end position="231"/>
    </location>
</feature>
<feature type="compositionally biased region" description="Basic and acidic residues" evidence="4">
    <location>
        <begin position="253"/>
        <end position="262"/>
    </location>
</feature>
<feature type="binding site" evidence="3">
    <location>
        <begin position="473"/>
        <end position="478"/>
    </location>
    <ligand>
        <name>ATP</name>
        <dbReference type="ChEBI" id="CHEBI:30616"/>
    </ligand>
</feature>
<dbReference type="EMBL" id="BA000017">
    <property type="protein sequence ID" value="BAB57438.1"/>
    <property type="molecule type" value="Genomic_DNA"/>
</dbReference>
<dbReference type="RefSeq" id="WP_000035746.1">
    <property type="nucleotide sequence ID" value="NC_002758.2"/>
</dbReference>
<dbReference type="SMR" id="P64164"/>
<dbReference type="KEGG" id="sav:SAV1276"/>
<dbReference type="HOGENOM" id="CLU_001981_9_2_9"/>
<dbReference type="PhylomeDB" id="P64164"/>
<dbReference type="Proteomes" id="UP000002481">
    <property type="component" value="Chromosome"/>
</dbReference>
<dbReference type="GO" id="GO:0005886">
    <property type="term" value="C:plasma membrane"/>
    <property type="evidence" value="ECO:0007669"/>
    <property type="project" value="UniProtKB-SubCell"/>
</dbReference>
<dbReference type="GO" id="GO:0005524">
    <property type="term" value="F:ATP binding"/>
    <property type="evidence" value="ECO:0007669"/>
    <property type="project" value="UniProtKB-KW"/>
</dbReference>
<dbReference type="GO" id="GO:0016887">
    <property type="term" value="F:ATP hydrolysis activity"/>
    <property type="evidence" value="ECO:0007669"/>
    <property type="project" value="InterPro"/>
</dbReference>
<dbReference type="GO" id="GO:0003677">
    <property type="term" value="F:DNA binding"/>
    <property type="evidence" value="ECO:0007669"/>
    <property type="project" value="UniProtKB-KW"/>
</dbReference>
<dbReference type="GO" id="GO:0051301">
    <property type="term" value="P:cell division"/>
    <property type="evidence" value="ECO:0007669"/>
    <property type="project" value="UniProtKB-KW"/>
</dbReference>
<dbReference type="GO" id="GO:0007059">
    <property type="term" value="P:chromosome segregation"/>
    <property type="evidence" value="ECO:0007669"/>
    <property type="project" value="UniProtKB-KW"/>
</dbReference>
<dbReference type="CDD" id="cd01127">
    <property type="entry name" value="TrwB_TraG_TraD_VirD4"/>
    <property type="match status" value="1"/>
</dbReference>
<dbReference type="Gene3D" id="3.30.980.40">
    <property type="match status" value="1"/>
</dbReference>
<dbReference type="Gene3D" id="3.40.50.300">
    <property type="entry name" value="P-loop containing nucleotide triphosphate hydrolases"/>
    <property type="match status" value="1"/>
</dbReference>
<dbReference type="Gene3D" id="1.10.10.10">
    <property type="entry name" value="Winged helix-like DNA-binding domain superfamily/Winged helix DNA-binding domain"/>
    <property type="match status" value="1"/>
</dbReference>
<dbReference type="InterPro" id="IPR003593">
    <property type="entry name" value="AAA+_ATPase"/>
</dbReference>
<dbReference type="InterPro" id="IPR050206">
    <property type="entry name" value="FtsK/SpoIIIE/SftA"/>
</dbReference>
<dbReference type="InterPro" id="IPR041027">
    <property type="entry name" value="FtsK_alpha"/>
</dbReference>
<dbReference type="InterPro" id="IPR002543">
    <property type="entry name" value="FtsK_dom"/>
</dbReference>
<dbReference type="InterPro" id="IPR018541">
    <property type="entry name" value="Ftsk_gamma"/>
</dbReference>
<dbReference type="InterPro" id="IPR027417">
    <property type="entry name" value="P-loop_NTPase"/>
</dbReference>
<dbReference type="InterPro" id="IPR036388">
    <property type="entry name" value="WH-like_DNA-bd_sf"/>
</dbReference>
<dbReference type="InterPro" id="IPR036390">
    <property type="entry name" value="WH_DNA-bd_sf"/>
</dbReference>
<dbReference type="PANTHER" id="PTHR22683:SF41">
    <property type="entry name" value="DNA TRANSLOCASE FTSK"/>
    <property type="match status" value="1"/>
</dbReference>
<dbReference type="PANTHER" id="PTHR22683">
    <property type="entry name" value="SPORULATION PROTEIN RELATED"/>
    <property type="match status" value="1"/>
</dbReference>
<dbReference type="Pfam" id="PF17854">
    <property type="entry name" value="FtsK_alpha"/>
    <property type="match status" value="1"/>
</dbReference>
<dbReference type="Pfam" id="PF09397">
    <property type="entry name" value="FtsK_gamma"/>
    <property type="match status" value="1"/>
</dbReference>
<dbReference type="Pfam" id="PF01580">
    <property type="entry name" value="FtsK_SpoIIIE"/>
    <property type="match status" value="1"/>
</dbReference>
<dbReference type="SMART" id="SM00382">
    <property type="entry name" value="AAA"/>
    <property type="match status" value="1"/>
</dbReference>
<dbReference type="SMART" id="SM00843">
    <property type="entry name" value="Ftsk_gamma"/>
    <property type="match status" value="1"/>
</dbReference>
<dbReference type="SUPFAM" id="SSF52540">
    <property type="entry name" value="P-loop containing nucleoside triphosphate hydrolases"/>
    <property type="match status" value="1"/>
</dbReference>
<dbReference type="SUPFAM" id="SSF46785">
    <property type="entry name" value="Winged helix' DNA-binding domain"/>
    <property type="match status" value="1"/>
</dbReference>
<dbReference type="PROSITE" id="PS50901">
    <property type="entry name" value="FTSK"/>
    <property type="match status" value="1"/>
</dbReference>
<proteinExistence type="inferred from homology"/>
<comment type="function">
    <text evidence="1">Essential cell division protein that coordinates cell division and chromosome segregation. The N-terminus is involved in assembly of the cell-division machinery. The C-terminus functions as a DNA motor that moves dsDNA in an ATP-dependent manner towards the dif recombination site, which is located within the replication terminus region. Required for activation of the Xer recombinase, allowing activation of chromosome unlinking by recombination (By similarity).</text>
</comment>
<comment type="subunit">
    <text evidence="1">Homohexamer. Forms a ring that surrounds DNA (By similarity).</text>
</comment>
<comment type="subcellular location">
    <subcellularLocation>
        <location evidence="1">Cell membrane</location>
        <topology evidence="1">Multi-pass membrane protein</topology>
    </subcellularLocation>
    <text evidence="1">Located at the septum.</text>
</comment>
<comment type="domain">
    <text evidence="1">Consists of an N-terminal domain, which is sufficient for the localization to the septal ring and is required for cell division, followed by a linker domain, and a C-terminal domain, which forms the translocation motor involved in chromosome segregation. The C-terminal domain can be further subdivided into alpha, beta and gamma subdomains. The alpha and beta subdomains form the DNA pump, and the gamma subdomain is a regulatory subdomain (By similarity).</text>
</comment>
<comment type="similarity">
    <text evidence="5">Belongs to the FtsK/SpoIIIE/SftA family.</text>
</comment>
<gene>
    <name type="primary">ftsK</name>
    <name type="ordered locus">SAV1276</name>
</gene>
<reference key="1">
    <citation type="journal article" date="2001" name="Lancet">
        <title>Whole genome sequencing of meticillin-resistant Staphylococcus aureus.</title>
        <authorList>
            <person name="Kuroda M."/>
            <person name="Ohta T."/>
            <person name="Uchiyama I."/>
            <person name="Baba T."/>
            <person name="Yuzawa H."/>
            <person name="Kobayashi I."/>
            <person name="Cui L."/>
            <person name="Oguchi A."/>
            <person name="Aoki K."/>
            <person name="Nagai Y."/>
            <person name="Lian J.-Q."/>
            <person name="Ito T."/>
            <person name="Kanamori M."/>
            <person name="Matsumaru H."/>
            <person name="Maruyama A."/>
            <person name="Murakami H."/>
            <person name="Hosoyama A."/>
            <person name="Mizutani-Ui Y."/>
            <person name="Takahashi N.K."/>
            <person name="Sawano T."/>
            <person name="Inoue R."/>
            <person name="Kaito C."/>
            <person name="Sekimizu K."/>
            <person name="Hirakawa H."/>
            <person name="Kuhara S."/>
            <person name="Goto S."/>
            <person name="Yabuzaki J."/>
            <person name="Kanehisa M."/>
            <person name="Yamashita A."/>
            <person name="Oshima K."/>
            <person name="Furuya K."/>
            <person name="Yoshino C."/>
            <person name="Shiba T."/>
            <person name="Hattori M."/>
            <person name="Ogasawara N."/>
            <person name="Hayashi H."/>
            <person name="Hiramatsu K."/>
        </authorList>
    </citation>
    <scope>NUCLEOTIDE SEQUENCE [LARGE SCALE GENOMIC DNA]</scope>
    <source>
        <strain>Mu50 / ATCC 700699</strain>
    </source>
</reference>
<sequence length="788" mass="88008">MAQAKKKSTAKKKTASKKRTNSRKKKNDNPIRYVIAILVVVLMVLGVFQLGIIGRLIDSFFNYLFGYSRYLTYILVLLATGFITYSKRIPKTRRTAGSIVLQIALLFVSQLVFHFNSGIKAEREPVLSYVYQSYQHSHFPNFGGGVLGFYLLELSVPLISLFGVCIITILLLCSSVILLTNHQHRDVAKVALENIKAWFGSFNEKMSERNQEKQLKREEKARLKEEQKARQNEQPQIKDVSDFTEVPQERDIPIYGHTENESKSQCQPSRKKRVFDAENSSNNIVNHQADQQEQLTEQTHNSVESENTIEEAGEVTNVSYVVPPLTLLNQPAKQKATSKAEVQRKGQVLENTLKDFGVNAKVTQIKIGPAVTQYEIQPAQGVKVSKIVNLHNDIALALAAKDVRIEAPIPGRSAVGIEVPNEKISLVSLKEVLDEKFPSNNKLEVGLGRDISGDPITVPLNEMPHLLVAGSTGSGKSVCINGIITSILLNAKPHEVKLMLIDPKMVELNVYNGIPHLLIPVVTNPHKAAQALEKIVAEMERRYDLFQHSSTRNIKGYNELIRKQNQELDEKQPELPYIVVIVDELADLMMVAGKEVENAIQRITQMARAAGIHLIVATQRPSVDVITGIIKNNIPSRIAFAVSSQTDSRTIIGTGGAEKLLGKGDMLYVGNGDSSQTRIQGAFLSDQEVQDVVNYVVEQQQANYVKEMEPDAPVDKSEMKSEDALYDEAYLFVVEQQKASTSLLQRQFRIGYNRASRLMDDLERNQVIGPQKGSKPRQVLIDLNNDEV</sequence>
<organism>
    <name type="scientific">Staphylococcus aureus (strain Mu50 / ATCC 700699)</name>
    <dbReference type="NCBI Taxonomy" id="158878"/>
    <lineage>
        <taxon>Bacteria</taxon>
        <taxon>Bacillati</taxon>
        <taxon>Bacillota</taxon>
        <taxon>Bacilli</taxon>
        <taxon>Bacillales</taxon>
        <taxon>Staphylococcaceae</taxon>
        <taxon>Staphylococcus</taxon>
    </lineage>
</organism>
<evidence type="ECO:0000250" key="1"/>
<evidence type="ECO:0000255" key="2"/>
<evidence type="ECO:0000255" key="3">
    <source>
        <dbReference type="PROSITE-ProRule" id="PRU00289"/>
    </source>
</evidence>
<evidence type="ECO:0000256" key="4">
    <source>
        <dbReference type="SAM" id="MobiDB-lite"/>
    </source>
</evidence>
<evidence type="ECO:0000305" key="5"/>
<accession>P64164</accession>
<accession>Q99UJ6</accession>
<name>FTSK_STAAM</name>
<keyword id="KW-0067">ATP-binding</keyword>
<keyword id="KW-0131">Cell cycle</keyword>
<keyword id="KW-0132">Cell division</keyword>
<keyword id="KW-1003">Cell membrane</keyword>
<keyword id="KW-0159">Chromosome partition</keyword>
<keyword id="KW-0238">DNA-binding</keyword>
<keyword id="KW-0472">Membrane</keyword>
<keyword id="KW-0547">Nucleotide-binding</keyword>
<keyword id="KW-0812">Transmembrane</keyword>
<keyword id="KW-1133">Transmembrane helix</keyword>
<protein>
    <recommendedName>
        <fullName>DNA translocase FtsK</fullName>
    </recommendedName>
</protein>